<gene>
    <name evidence="1" type="primary">hspQ</name>
    <name type="ordered locus">EC55989_1015</name>
</gene>
<sequence length="105" mass="11779">MIASKFGIGQQVRHSLLGYLGVVVDIDPVYSLSEPSPDELAVNDELRAAPWYHVVMEDDNGLPVHTYLAEAQLSSELQDEHPEQPSMDELAQTIRKQLQAPRLRN</sequence>
<name>HSPQ_ECO55</name>
<comment type="function">
    <text evidence="1">Involved in the degradation of certain denaturated proteins, including DnaA, during heat shock stress.</text>
</comment>
<comment type="subcellular location">
    <subcellularLocation>
        <location evidence="1">Cytoplasm</location>
    </subcellularLocation>
</comment>
<comment type="similarity">
    <text evidence="1">Belongs to the HspQ family.</text>
</comment>
<accession>B7LE66</accession>
<proteinExistence type="inferred from homology"/>
<feature type="chain" id="PRO_1000164510" description="Heat shock protein HspQ">
    <location>
        <begin position="1"/>
        <end position="105"/>
    </location>
</feature>
<feature type="region of interest" description="Disordered" evidence="2">
    <location>
        <begin position="75"/>
        <end position="105"/>
    </location>
</feature>
<protein>
    <recommendedName>
        <fullName evidence="1">Heat shock protein HspQ</fullName>
    </recommendedName>
</protein>
<organism>
    <name type="scientific">Escherichia coli (strain 55989 / EAEC)</name>
    <dbReference type="NCBI Taxonomy" id="585055"/>
    <lineage>
        <taxon>Bacteria</taxon>
        <taxon>Pseudomonadati</taxon>
        <taxon>Pseudomonadota</taxon>
        <taxon>Gammaproteobacteria</taxon>
        <taxon>Enterobacterales</taxon>
        <taxon>Enterobacteriaceae</taxon>
        <taxon>Escherichia</taxon>
    </lineage>
</organism>
<reference key="1">
    <citation type="journal article" date="2009" name="PLoS Genet.">
        <title>Organised genome dynamics in the Escherichia coli species results in highly diverse adaptive paths.</title>
        <authorList>
            <person name="Touchon M."/>
            <person name="Hoede C."/>
            <person name="Tenaillon O."/>
            <person name="Barbe V."/>
            <person name="Baeriswyl S."/>
            <person name="Bidet P."/>
            <person name="Bingen E."/>
            <person name="Bonacorsi S."/>
            <person name="Bouchier C."/>
            <person name="Bouvet O."/>
            <person name="Calteau A."/>
            <person name="Chiapello H."/>
            <person name="Clermont O."/>
            <person name="Cruveiller S."/>
            <person name="Danchin A."/>
            <person name="Diard M."/>
            <person name="Dossat C."/>
            <person name="Karoui M.E."/>
            <person name="Frapy E."/>
            <person name="Garry L."/>
            <person name="Ghigo J.M."/>
            <person name="Gilles A.M."/>
            <person name="Johnson J."/>
            <person name="Le Bouguenec C."/>
            <person name="Lescat M."/>
            <person name="Mangenot S."/>
            <person name="Martinez-Jehanne V."/>
            <person name="Matic I."/>
            <person name="Nassif X."/>
            <person name="Oztas S."/>
            <person name="Petit M.A."/>
            <person name="Pichon C."/>
            <person name="Rouy Z."/>
            <person name="Ruf C.S."/>
            <person name="Schneider D."/>
            <person name="Tourret J."/>
            <person name="Vacherie B."/>
            <person name="Vallenet D."/>
            <person name="Medigue C."/>
            <person name="Rocha E.P.C."/>
            <person name="Denamur E."/>
        </authorList>
    </citation>
    <scope>NUCLEOTIDE SEQUENCE [LARGE SCALE GENOMIC DNA]</scope>
    <source>
        <strain>55989 / EAEC</strain>
    </source>
</reference>
<keyword id="KW-0963">Cytoplasm</keyword>
<keyword id="KW-1185">Reference proteome</keyword>
<keyword id="KW-0346">Stress response</keyword>
<evidence type="ECO:0000255" key="1">
    <source>
        <dbReference type="HAMAP-Rule" id="MF_01194"/>
    </source>
</evidence>
<evidence type="ECO:0000256" key="2">
    <source>
        <dbReference type="SAM" id="MobiDB-lite"/>
    </source>
</evidence>
<dbReference type="EMBL" id="CU928145">
    <property type="protein sequence ID" value="CAU96877.1"/>
    <property type="molecule type" value="Genomic_DNA"/>
</dbReference>
<dbReference type="RefSeq" id="WP_001295356.1">
    <property type="nucleotide sequence ID" value="NZ_CP028304.1"/>
</dbReference>
<dbReference type="SMR" id="B7LE66"/>
<dbReference type="GeneID" id="93776448"/>
<dbReference type="KEGG" id="eck:EC55989_1015"/>
<dbReference type="HOGENOM" id="CLU_123865_1_0_6"/>
<dbReference type="Proteomes" id="UP000000746">
    <property type="component" value="Chromosome"/>
</dbReference>
<dbReference type="GO" id="GO:0005737">
    <property type="term" value="C:cytoplasm"/>
    <property type="evidence" value="ECO:0007669"/>
    <property type="project" value="UniProtKB-SubCell"/>
</dbReference>
<dbReference type="GO" id="GO:0003677">
    <property type="term" value="F:DNA binding"/>
    <property type="evidence" value="ECO:0007669"/>
    <property type="project" value="InterPro"/>
</dbReference>
<dbReference type="GO" id="GO:0009408">
    <property type="term" value="P:response to heat"/>
    <property type="evidence" value="ECO:0007669"/>
    <property type="project" value="UniProtKB-UniRule"/>
</dbReference>
<dbReference type="Gene3D" id="2.30.30.390">
    <property type="entry name" value="Hemimethylated DNA-binding domain"/>
    <property type="match status" value="1"/>
</dbReference>
<dbReference type="HAMAP" id="MF_01194">
    <property type="entry name" value="HspQ"/>
    <property type="match status" value="1"/>
</dbReference>
<dbReference type="InterPro" id="IPR011722">
    <property type="entry name" value="Hemimethylated_DNA-bd_dom"/>
</dbReference>
<dbReference type="InterPro" id="IPR036623">
    <property type="entry name" value="Hemimethylated_DNA-bd_sf"/>
</dbReference>
<dbReference type="InterPro" id="IPR022866">
    <property type="entry name" value="HspQ"/>
</dbReference>
<dbReference type="NCBIfam" id="NF010729">
    <property type="entry name" value="PRK14129.1"/>
    <property type="match status" value="1"/>
</dbReference>
<dbReference type="NCBIfam" id="TIGR02097">
    <property type="entry name" value="yccV"/>
    <property type="match status" value="1"/>
</dbReference>
<dbReference type="Pfam" id="PF08755">
    <property type="entry name" value="YccV-like"/>
    <property type="match status" value="1"/>
</dbReference>
<dbReference type="SMART" id="SM00992">
    <property type="entry name" value="YccV-like"/>
    <property type="match status" value="1"/>
</dbReference>
<dbReference type="SUPFAM" id="SSF141255">
    <property type="entry name" value="YccV-like"/>
    <property type="match status" value="1"/>
</dbReference>